<evidence type="ECO:0000255" key="1">
    <source>
        <dbReference type="HAMAP-Rule" id="MF_01206"/>
    </source>
</evidence>
<feature type="signal peptide" description="Tat-type signal" evidence="1">
    <location>
        <begin position="1"/>
        <end position="40"/>
    </location>
</feature>
<feature type="chain" id="PRO_5000258975" description="Protein-methionine-sulfoxide reductase catalytic subunit MsrP" evidence="1">
    <location>
        <begin position="41"/>
        <end position="317"/>
    </location>
</feature>
<feature type="binding site" evidence="1">
    <location>
        <position position="72"/>
    </location>
    <ligand>
        <name>Mo-molybdopterin</name>
        <dbReference type="ChEBI" id="CHEBI:71302"/>
    </ligand>
</feature>
<feature type="binding site" evidence="1">
    <location>
        <begin position="75"/>
        <end position="76"/>
    </location>
    <ligand>
        <name>Mo-molybdopterin</name>
        <dbReference type="ChEBI" id="CHEBI:71302"/>
    </ligand>
</feature>
<feature type="binding site" evidence="1">
    <location>
        <position position="129"/>
    </location>
    <ligand>
        <name>Mo-molybdopterin</name>
        <dbReference type="ChEBI" id="CHEBI:71302"/>
    </ligand>
    <ligandPart>
        <name>Mo</name>
        <dbReference type="ChEBI" id="CHEBI:28685"/>
    </ligandPart>
</feature>
<feature type="binding site" evidence="1">
    <location>
        <position position="164"/>
    </location>
    <ligand>
        <name>Mo-molybdopterin</name>
        <dbReference type="ChEBI" id="CHEBI:71302"/>
    </ligand>
</feature>
<feature type="binding site" evidence="1">
    <location>
        <position position="216"/>
    </location>
    <ligand>
        <name>Mo-molybdopterin</name>
        <dbReference type="ChEBI" id="CHEBI:71302"/>
    </ligand>
</feature>
<feature type="binding site" evidence="1">
    <location>
        <position position="221"/>
    </location>
    <ligand>
        <name>Mo-molybdopterin</name>
        <dbReference type="ChEBI" id="CHEBI:71302"/>
    </ligand>
</feature>
<feature type="binding site" evidence="1">
    <location>
        <begin position="232"/>
        <end position="234"/>
    </location>
    <ligand>
        <name>Mo-molybdopterin</name>
        <dbReference type="ChEBI" id="CHEBI:71302"/>
    </ligand>
</feature>
<sequence length="317" mass="35746">MNKFTKTDVTPEKLFIQRRKIIQGMSVLSAAAAFPNLAAAKKTEEKRTALSFKADNKPDLILTPENKVIGYNNYYEFGVDKASPAKFASTLKTEPWTIEVSGEVENPMIFTLAQLLAFPLEERIYRLRCVEAWSMIVPWIGFELSRLLEKAKPTGKAKYVAFETLYDPANMPGQKNTLFGGGLDYPYKEGLTLAEAMNPLTILSVGLYGKTLTPQNGAPIRLVVPWKYGFKSIKSIVKIRLTERQPVTTWNQLTPHEYGFYANVNPEVDHPRWSQASERIIGSGGLFTVKRQPTLPFNGYEKEVAHLYKGLDLKVNF</sequence>
<organism>
    <name type="scientific">Actinobacillus succinogenes (strain ATCC 55618 / DSM 22257 / CCUG 43843 / 130Z)</name>
    <dbReference type="NCBI Taxonomy" id="339671"/>
    <lineage>
        <taxon>Bacteria</taxon>
        <taxon>Pseudomonadati</taxon>
        <taxon>Pseudomonadota</taxon>
        <taxon>Gammaproteobacteria</taxon>
        <taxon>Pasteurellales</taxon>
        <taxon>Pasteurellaceae</taxon>
        <taxon>Actinobacillus</taxon>
    </lineage>
</organism>
<dbReference type="EC" id="1.8.5.-" evidence="1"/>
<dbReference type="EMBL" id="CP000746">
    <property type="protein sequence ID" value="ABR75187.1"/>
    <property type="molecule type" value="Genomic_DNA"/>
</dbReference>
<dbReference type="RefSeq" id="WP_012073564.1">
    <property type="nucleotide sequence ID" value="NC_009655.1"/>
</dbReference>
<dbReference type="SMR" id="A6VQE0"/>
<dbReference type="STRING" id="339671.Asuc_1836"/>
<dbReference type="KEGG" id="asu:Asuc_1836"/>
<dbReference type="eggNOG" id="COG2041">
    <property type="taxonomic scope" value="Bacteria"/>
</dbReference>
<dbReference type="HOGENOM" id="CLU_045520_0_0_6"/>
<dbReference type="OrthoDB" id="9795587at2"/>
<dbReference type="Proteomes" id="UP000001114">
    <property type="component" value="Chromosome"/>
</dbReference>
<dbReference type="GO" id="GO:0042597">
    <property type="term" value="C:periplasmic space"/>
    <property type="evidence" value="ECO:0007669"/>
    <property type="project" value="UniProtKB-SubCell"/>
</dbReference>
<dbReference type="GO" id="GO:0046872">
    <property type="term" value="F:metal ion binding"/>
    <property type="evidence" value="ECO:0007669"/>
    <property type="project" value="UniProtKB-KW"/>
</dbReference>
<dbReference type="GO" id="GO:0043546">
    <property type="term" value="F:molybdopterin cofactor binding"/>
    <property type="evidence" value="ECO:0007669"/>
    <property type="project" value="UniProtKB-UniRule"/>
</dbReference>
<dbReference type="GO" id="GO:0016672">
    <property type="term" value="F:oxidoreductase activity, acting on a sulfur group of donors, quinone or similar compound as acceptor"/>
    <property type="evidence" value="ECO:0007669"/>
    <property type="project" value="UniProtKB-UniRule"/>
</dbReference>
<dbReference type="GO" id="GO:0030091">
    <property type="term" value="P:protein repair"/>
    <property type="evidence" value="ECO:0007669"/>
    <property type="project" value="UniProtKB-UniRule"/>
</dbReference>
<dbReference type="Gene3D" id="3.90.420.10">
    <property type="entry name" value="Oxidoreductase, molybdopterin-binding domain"/>
    <property type="match status" value="1"/>
</dbReference>
<dbReference type="HAMAP" id="MF_01206">
    <property type="entry name" value="MsrP"/>
    <property type="match status" value="1"/>
</dbReference>
<dbReference type="InterPro" id="IPR022867">
    <property type="entry name" value="MsrP"/>
</dbReference>
<dbReference type="InterPro" id="IPR000572">
    <property type="entry name" value="OxRdtase_Mopterin-bd_dom"/>
</dbReference>
<dbReference type="InterPro" id="IPR036374">
    <property type="entry name" value="OxRdtase_Mopterin-bd_sf"/>
</dbReference>
<dbReference type="NCBIfam" id="NF003767">
    <property type="entry name" value="PRK05363.1"/>
    <property type="match status" value="1"/>
</dbReference>
<dbReference type="PANTHER" id="PTHR43032">
    <property type="entry name" value="PROTEIN-METHIONINE-SULFOXIDE REDUCTASE"/>
    <property type="match status" value="1"/>
</dbReference>
<dbReference type="PANTHER" id="PTHR43032:SF3">
    <property type="entry name" value="PROTEIN-METHIONINE-SULFOXIDE REDUCTASE CATALYTIC SUBUNIT MSRP"/>
    <property type="match status" value="1"/>
</dbReference>
<dbReference type="Pfam" id="PF00174">
    <property type="entry name" value="Oxidored_molyb"/>
    <property type="match status" value="1"/>
</dbReference>
<dbReference type="SUPFAM" id="SSF56524">
    <property type="entry name" value="Oxidoreductase molybdopterin-binding domain"/>
    <property type="match status" value="1"/>
</dbReference>
<proteinExistence type="inferred from homology"/>
<comment type="function">
    <text evidence="1">Part of the MsrPQ system that repairs oxidized periplasmic proteins containing methionine sulfoxide residues (Met-O), using respiratory chain electrons. Thus protects these proteins from oxidative-stress damage caused by reactive species of oxygen and chlorine generated by the host defense mechanisms. MsrPQ is essential for the maintenance of envelope integrity under bleach stress, rescuing a wide series of structurally unrelated periplasmic proteins from methionine oxidation. The catalytic subunit MsrP is non-stereospecific, being able to reduce both (R-) and (S-) diastereoisomers of methionine sulfoxide.</text>
</comment>
<comment type="catalytic activity">
    <reaction evidence="1">
        <text>L-methionyl-[protein] + a quinone + H2O = L-methionyl-(S)-S-oxide-[protein] + a quinol</text>
        <dbReference type="Rhea" id="RHEA:51292"/>
        <dbReference type="Rhea" id="RHEA-COMP:12313"/>
        <dbReference type="Rhea" id="RHEA-COMP:12315"/>
        <dbReference type="ChEBI" id="CHEBI:15377"/>
        <dbReference type="ChEBI" id="CHEBI:16044"/>
        <dbReference type="ChEBI" id="CHEBI:24646"/>
        <dbReference type="ChEBI" id="CHEBI:44120"/>
        <dbReference type="ChEBI" id="CHEBI:132124"/>
    </reaction>
</comment>
<comment type="catalytic activity">
    <reaction evidence="1">
        <text>L-methionyl-[protein] + a quinone + H2O = L-methionyl-(R)-S-oxide-[protein] + a quinol</text>
        <dbReference type="Rhea" id="RHEA:51296"/>
        <dbReference type="Rhea" id="RHEA-COMP:12313"/>
        <dbReference type="Rhea" id="RHEA-COMP:12314"/>
        <dbReference type="ChEBI" id="CHEBI:15377"/>
        <dbReference type="ChEBI" id="CHEBI:16044"/>
        <dbReference type="ChEBI" id="CHEBI:24646"/>
        <dbReference type="ChEBI" id="CHEBI:45764"/>
        <dbReference type="ChEBI" id="CHEBI:132124"/>
    </reaction>
</comment>
<comment type="cofactor">
    <cofactor evidence="1">
        <name>Mo-molybdopterin</name>
        <dbReference type="ChEBI" id="CHEBI:71302"/>
    </cofactor>
    <text evidence="1">Binds 1 Mo-molybdopterin (Mo-MPT) cofactor per subunit.</text>
</comment>
<comment type="subunit">
    <text evidence="1">Heterodimer of a catalytic subunit (MsrP) and a heme-binding subunit (MsrQ).</text>
</comment>
<comment type="subcellular location">
    <subcellularLocation>
        <location evidence="1">Periplasm</location>
    </subcellularLocation>
    <text evidence="1">Is attached to the inner membrane when interacting with the MsrQ subunit.</text>
</comment>
<comment type="PTM">
    <text evidence="1">Predicted to be exported by the Tat system. The position of the signal peptide cleavage has not been experimentally proven.</text>
</comment>
<comment type="similarity">
    <text evidence="1">Belongs to the MsrP family.</text>
</comment>
<gene>
    <name evidence="1" type="primary">msrP</name>
    <name type="ordered locus">Asuc_1836</name>
</gene>
<reference key="1">
    <citation type="journal article" date="2010" name="BMC Genomics">
        <title>A genomic perspective on the potential of Actinobacillus succinogenes for industrial succinate production.</title>
        <authorList>
            <person name="McKinlay J.B."/>
            <person name="Laivenieks M."/>
            <person name="Schindler B.D."/>
            <person name="McKinlay A.A."/>
            <person name="Siddaramappa S."/>
            <person name="Challacombe J.F."/>
            <person name="Lowry S.R."/>
            <person name="Clum A."/>
            <person name="Lapidus A.L."/>
            <person name="Burkhart K.B."/>
            <person name="Harkins V."/>
            <person name="Vieille C."/>
        </authorList>
    </citation>
    <scope>NUCLEOTIDE SEQUENCE [LARGE SCALE GENOMIC DNA]</scope>
    <source>
        <strain>ATCC 55618 / DSM 22257 / CCUG 43843 / 130Z</strain>
    </source>
</reference>
<keyword id="KW-0479">Metal-binding</keyword>
<keyword id="KW-0500">Molybdenum</keyword>
<keyword id="KW-0560">Oxidoreductase</keyword>
<keyword id="KW-0574">Periplasm</keyword>
<keyword id="KW-1185">Reference proteome</keyword>
<keyword id="KW-0732">Signal</keyword>
<protein>
    <recommendedName>
        <fullName evidence="1">Protein-methionine-sulfoxide reductase catalytic subunit MsrP</fullName>
        <ecNumber evidence="1">1.8.5.-</ecNumber>
    </recommendedName>
</protein>
<name>MSRP_ACTSZ</name>
<accession>A6VQE0</accession>